<organism>
    <name type="scientific">Bordetella petrii (strain ATCC BAA-461 / DSM 12804 / CCUG 43448)</name>
    <dbReference type="NCBI Taxonomy" id="340100"/>
    <lineage>
        <taxon>Bacteria</taxon>
        <taxon>Pseudomonadati</taxon>
        <taxon>Pseudomonadota</taxon>
        <taxon>Betaproteobacteria</taxon>
        <taxon>Burkholderiales</taxon>
        <taxon>Alcaligenaceae</taxon>
        <taxon>Bordetella</taxon>
    </lineage>
</organism>
<accession>A9I6L9</accession>
<feature type="chain" id="PRO_1000096767" description="Phosphopantetheine adenylyltransferase">
    <location>
        <begin position="1"/>
        <end position="170"/>
    </location>
</feature>
<feature type="binding site" evidence="1">
    <location>
        <begin position="9"/>
        <end position="10"/>
    </location>
    <ligand>
        <name>ATP</name>
        <dbReference type="ChEBI" id="CHEBI:30616"/>
    </ligand>
</feature>
<feature type="binding site" evidence="1">
    <location>
        <position position="9"/>
    </location>
    <ligand>
        <name>substrate</name>
    </ligand>
</feature>
<feature type="binding site" evidence="1">
    <location>
        <position position="17"/>
    </location>
    <ligand>
        <name>ATP</name>
        <dbReference type="ChEBI" id="CHEBI:30616"/>
    </ligand>
</feature>
<feature type="binding site" evidence="1">
    <location>
        <position position="41"/>
    </location>
    <ligand>
        <name>substrate</name>
    </ligand>
</feature>
<feature type="binding site" evidence="1">
    <location>
        <position position="73"/>
    </location>
    <ligand>
        <name>substrate</name>
    </ligand>
</feature>
<feature type="binding site" evidence="1">
    <location>
        <position position="87"/>
    </location>
    <ligand>
        <name>substrate</name>
    </ligand>
</feature>
<feature type="binding site" evidence="1">
    <location>
        <begin position="88"/>
        <end position="90"/>
    </location>
    <ligand>
        <name>ATP</name>
        <dbReference type="ChEBI" id="CHEBI:30616"/>
    </ligand>
</feature>
<feature type="binding site" evidence="1">
    <location>
        <position position="98"/>
    </location>
    <ligand>
        <name>ATP</name>
        <dbReference type="ChEBI" id="CHEBI:30616"/>
    </ligand>
</feature>
<feature type="binding site" evidence="1">
    <location>
        <begin position="123"/>
        <end position="129"/>
    </location>
    <ligand>
        <name>ATP</name>
        <dbReference type="ChEBI" id="CHEBI:30616"/>
    </ligand>
</feature>
<feature type="site" description="Transition state stabilizer" evidence="1">
    <location>
        <position position="17"/>
    </location>
</feature>
<keyword id="KW-0067">ATP-binding</keyword>
<keyword id="KW-0173">Coenzyme A biosynthesis</keyword>
<keyword id="KW-0963">Cytoplasm</keyword>
<keyword id="KW-0460">Magnesium</keyword>
<keyword id="KW-0547">Nucleotide-binding</keyword>
<keyword id="KW-0548">Nucleotidyltransferase</keyword>
<keyword id="KW-0808">Transferase</keyword>
<dbReference type="EC" id="2.7.7.3" evidence="1"/>
<dbReference type="EMBL" id="AM902716">
    <property type="protein sequence ID" value="CAP44319.1"/>
    <property type="molecule type" value="Genomic_DNA"/>
</dbReference>
<dbReference type="SMR" id="A9I6L9"/>
<dbReference type="STRING" id="94624.Bpet3973"/>
<dbReference type="KEGG" id="bpt:Bpet3973"/>
<dbReference type="eggNOG" id="COG0669">
    <property type="taxonomic scope" value="Bacteria"/>
</dbReference>
<dbReference type="UniPathway" id="UPA00241">
    <property type="reaction ID" value="UER00355"/>
</dbReference>
<dbReference type="Proteomes" id="UP000001225">
    <property type="component" value="Chromosome"/>
</dbReference>
<dbReference type="GO" id="GO:0005737">
    <property type="term" value="C:cytoplasm"/>
    <property type="evidence" value="ECO:0007669"/>
    <property type="project" value="UniProtKB-SubCell"/>
</dbReference>
<dbReference type="GO" id="GO:0005524">
    <property type="term" value="F:ATP binding"/>
    <property type="evidence" value="ECO:0007669"/>
    <property type="project" value="UniProtKB-KW"/>
</dbReference>
<dbReference type="GO" id="GO:0004595">
    <property type="term" value="F:pantetheine-phosphate adenylyltransferase activity"/>
    <property type="evidence" value="ECO:0007669"/>
    <property type="project" value="UniProtKB-UniRule"/>
</dbReference>
<dbReference type="GO" id="GO:0015937">
    <property type="term" value="P:coenzyme A biosynthetic process"/>
    <property type="evidence" value="ECO:0007669"/>
    <property type="project" value="UniProtKB-UniRule"/>
</dbReference>
<dbReference type="CDD" id="cd02163">
    <property type="entry name" value="PPAT"/>
    <property type="match status" value="1"/>
</dbReference>
<dbReference type="Gene3D" id="3.40.50.620">
    <property type="entry name" value="HUPs"/>
    <property type="match status" value="1"/>
</dbReference>
<dbReference type="HAMAP" id="MF_00151">
    <property type="entry name" value="PPAT_bact"/>
    <property type="match status" value="1"/>
</dbReference>
<dbReference type="InterPro" id="IPR004821">
    <property type="entry name" value="Cyt_trans-like"/>
</dbReference>
<dbReference type="InterPro" id="IPR001980">
    <property type="entry name" value="PPAT"/>
</dbReference>
<dbReference type="InterPro" id="IPR014729">
    <property type="entry name" value="Rossmann-like_a/b/a_fold"/>
</dbReference>
<dbReference type="NCBIfam" id="TIGR01510">
    <property type="entry name" value="coaD_prev_kdtB"/>
    <property type="match status" value="1"/>
</dbReference>
<dbReference type="NCBIfam" id="TIGR00125">
    <property type="entry name" value="cyt_tran_rel"/>
    <property type="match status" value="1"/>
</dbReference>
<dbReference type="PANTHER" id="PTHR21342">
    <property type="entry name" value="PHOSPHOPANTETHEINE ADENYLYLTRANSFERASE"/>
    <property type="match status" value="1"/>
</dbReference>
<dbReference type="PANTHER" id="PTHR21342:SF1">
    <property type="entry name" value="PHOSPHOPANTETHEINE ADENYLYLTRANSFERASE"/>
    <property type="match status" value="1"/>
</dbReference>
<dbReference type="Pfam" id="PF01467">
    <property type="entry name" value="CTP_transf_like"/>
    <property type="match status" value="1"/>
</dbReference>
<dbReference type="PRINTS" id="PR01020">
    <property type="entry name" value="LPSBIOSNTHSS"/>
</dbReference>
<dbReference type="SUPFAM" id="SSF52374">
    <property type="entry name" value="Nucleotidylyl transferase"/>
    <property type="match status" value="1"/>
</dbReference>
<gene>
    <name evidence="1" type="primary">coaD</name>
    <name type="ordered locus">Bpet3973</name>
</gene>
<sequence>MITAVYPGTFDPLTRGHEDLVRRAAALFDKVVVGIAHSRNKKPFFSIDERVEIAREVLGHYPNVEVRSFAGLLKDFVREQNGRVIVRGLRAVSDFEYEFQMAGMNRHLLPEVETMFMTPSDQYQFISGTIVREIAQLGGDVSKFVFPSVERWLQAKAKEYREQSWPAGKG</sequence>
<evidence type="ECO:0000255" key="1">
    <source>
        <dbReference type="HAMAP-Rule" id="MF_00151"/>
    </source>
</evidence>
<name>COAD_BORPD</name>
<proteinExistence type="inferred from homology"/>
<protein>
    <recommendedName>
        <fullName evidence="1">Phosphopantetheine adenylyltransferase</fullName>
        <ecNumber evidence="1">2.7.7.3</ecNumber>
    </recommendedName>
    <alternativeName>
        <fullName evidence="1">Dephospho-CoA pyrophosphorylase</fullName>
    </alternativeName>
    <alternativeName>
        <fullName evidence="1">Pantetheine-phosphate adenylyltransferase</fullName>
        <shortName evidence="1">PPAT</shortName>
    </alternativeName>
</protein>
<reference key="1">
    <citation type="journal article" date="2008" name="BMC Genomics">
        <title>The missing link: Bordetella petrii is endowed with both the metabolic versatility of environmental bacteria and virulence traits of pathogenic Bordetellae.</title>
        <authorList>
            <person name="Gross R."/>
            <person name="Guzman C.A."/>
            <person name="Sebaihia M."/>
            <person name="Martin dos Santos V.A.P."/>
            <person name="Pieper D.H."/>
            <person name="Koebnik R."/>
            <person name="Lechner M."/>
            <person name="Bartels D."/>
            <person name="Buhrmester J."/>
            <person name="Choudhuri J.V."/>
            <person name="Ebensen T."/>
            <person name="Gaigalat L."/>
            <person name="Herrmann S."/>
            <person name="Khachane A.N."/>
            <person name="Larisch C."/>
            <person name="Link S."/>
            <person name="Linke B."/>
            <person name="Meyer F."/>
            <person name="Mormann S."/>
            <person name="Nakunst D."/>
            <person name="Rueckert C."/>
            <person name="Schneiker-Bekel S."/>
            <person name="Schulze K."/>
            <person name="Voerholter F.-J."/>
            <person name="Yevsa T."/>
            <person name="Engle J.T."/>
            <person name="Goldman W.E."/>
            <person name="Puehler A."/>
            <person name="Goebel U.B."/>
            <person name="Goesmann A."/>
            <person name="Bloecker H."/>
            <person name="Kaiser O."/>
            <person name="Martinez-Arias R."/>
        </authorList>
    </citation>
    <scope>NUCLEOTIDE SEQUENCE [LARGE SCALE GENOMIC DNA]</scope>
    <source>
        <strain>ATCC BAA-461 / DSM 12804 / CCUG 43448</strain>
    </source>
</reference>
<comment type="function">
    <text evidence="1">Reversibly transfers an adenylyl group from ATP to 4'-phosphopantetheine, yielding dephospho-CoA (dPCoA) and pyrophosphate.</text>
</comment>
<comment type="catalytic activity">
    <reaction evidence="1">
        <text>(R)-4'-phosphopantetheine + ATP + H(+) = 3'-dephospho-CoA + diphosphate</text>
        <dbReference type="Rhea" id="RHEA:19801"/>
        <dbReference type="ChEBI" id="CHEBI:15378"/>
        <dbReference type="ChEBI" id="CHEBI:30616"/>
        <dbReference type="ChEBI" id="CHEBI:33019"/>
        <dbReference type="ChEBI" id="CHEBI:57328"/>
        <dbReference type="ChEBI" id="CHEBI:61723"/>
        <dbReference type="EC" id="2.7.7.3"/>
    </reaction>
</comment>
<comment type="cofactor">
    <cofactor evidence="1">
        <name>Mg(2+)</name>
        <dbReference type="ChEBI" id="CHEBI:18420"/>
    </cofactor>
</comment>
<comment type="pathway">
    <text evidence="1">Cofactor biosynthesis; coenzyme A biosynthesis; CoA from (R)-pantothenate: step 4/5.</text>
</comment>
<comment type="subunit">
    <text evidence="1">Homohexamer.</text>
</comment>
<comment type="subcellular location">
    <subcellularLocation>
        <location evidence="1">Cytoplasm</location>
    </subcellularLocation>
</comment>
<comment type="similarity">
    <text evidence="1">Belongs to the bacterial CoaD family.</text>
</comment>